<proteinExistence type="inferred from homology"/>
<sequence>MIKEFKEFIMRGNVLDMAVGVILGAALKSIVDSLTKNLINPIISLFVGQVDLSGIAVTIPGTKAVFQIGNFLNDVINFLIIAIIVFLIVKGFNKLRDMGKKTEEEVAEEAAPTQEELYLKEIRDLLANKDHQ</sequence>
<evidence type="ECO:0000255" key="1">
    <source>
        <dbReference type="HAMAP-Rule" id="MF_00115"/>
    </source>
</evidence>
<feature type="chain" id="PRO_0000238008" description="Large-conductance mechanosensitive channel">
    <location>
        <begin position="1"/>
        <end position="132"/>
    </location>
</feature>
<feature type="transmembrane region" description="Helical" evidence="1">
    <location>
        <begin position="14"/>
        <end position="34"/>
    </location>
</feature>
<feature type="transmembrane region" description="Helical" evidence="1">
    <location>
        <begin position="39"/>
        <end position="59"/>
    </location>
</feature>
<feature type="transmembrane region" description="Helical" evidence="1">
    <location>
        <begin position="68"/>
        <end position="88"/>
    </location>
</feature>
<organism>
    <name type="scientific">Latilactobacillus sakei subsp. sakei (strain 23K)</name>
    <name type="common">Lactobacillus sakei subsp. sakei</name>
    <dbReference type="NCBI Taxonomy" id="314315"/>
    <lineage>
        <taxon>Bacteria</taxon>
        <taxon>Bacillati</taxon>
        <taxon>Bacillota</taxon>
        <taxon>Bacilli</taxon>
        <taxon>Lactobacillales</taxon>
        <taxon>Lactobacillaceae</taxon>
        <taxon>Latilactobacillus</taxon>
    </lineage>
</organism>
<reference key="1">
    <citation type="journal article" date="2005" name="Nat. Biotechnol.">
        <title>The complete genome sequence of the meat-borne lactic acid bacterium Lactobacillus sakei 23K.</title>
        <authorList>
            <person name="Chaillou S."/>
            <person name="Champomier-Verges M.-C."/>
            <person name="Cornet M."/>
            <person name="Crutz-Le Coq A.-M."/>
            <person name="Dudez A.-M."/>
            <person name="Martin V."/>
            <person name="Beaufils S."/>
            <person name="Darbon-Rongere E."/>
            <person name="Bossy R."/>
            <person name="Loux V."/>
            <person name="Zagorec M."/>
        </authorList>
    </citation>
    <scope>NUCLEOTIDE SEQUENCE [LARGE SCALE GENOMIC DNA]</scope>
    <source>
        <strain>23K</strain>
    </source>
</reference>
<dbReference type="EMBL" id="CR936503">
    <property type="protein sequence ID" value="CAI55945.1"/>
    <property type="molecule type" value="Genomic_DNA"/>
</dbReference>
<dbReference type="RefSeq" id="WP_011375330.1">
    <property type="nucleotide sequence ID" value="NC_007576.1"/>
</dbReference>
<dbReference type="SMR" id="Q38V39"/>
<dbReference type="STRING" id="314315.LCA_1638"/>
<dbReference type="GeneID" id="57132559"/>
<dbReference type="KEGG" id="lsa:LCA_1638"/>
<dbReference type="eggNOG" id="COG1970">
    <property type="taxonomic scope" value="Bacteria"/>
</dbReference>
<dbReference type="HOGENOM" id="CLU_095787_1_0_9"/>
<dbReference type="OrthoDB" id="9810350at2"/>
<dbReference type="Proteomes" id="UP000002707">
    <property type="component" value="Chromosome"/>
</dbReference>
<dbReference type="GO" id="GO:0005886">
    <property type="term" value="C:plasma membrane"/>
    <property type="evidence" value="ECO:0007669"/>
    <property type="project" value="UniProtKB-SubCell"/>
</dbReference>
<dbReference type="GO" id="GO:0008381">
    <property type="term" value="F:mechanosensitive monoatomic ion channel activity"/>
    <property type="evidence" value="ECO:0007669"/>
    <property type="project" value="UniProtKB-UniRule"/>
</dbReference>
<dbReference type="Gene3D" id="1.10.1200.120">
    <property type="entry name" value="Large-conductance mechanosensitive channel, MscL, domain 1"/>
    <property type="match status" value="1"/>
</dbReference>
<dbReference type="HAMAP" id="MF_00115">
    <property type="entry name" value="MscL"/>
    <property type="match status" value="1"/>
</dbReference>
<dbReference type="InterPro" id="IPR019823">
    <property type="entry name" value="Mechanosensitive_channel_CS"/>
</dbReference>
<dbReference type="InterPro" id="IPR001185">
    <property type="entry name" value="MS_channel"/>
</dbReference>
<dbReference type="InterPro" id="IPR037673">
    <property type="entry name" value="MSC/AndL"/>
</dbReference>
<dbReference type="InterPro" id="IPR036019">
    <property type="entry name" value="MscL_channel"/>
</dbReference>
<dbReference type="NCBIfam" id="TIGR00220">
    <property type="entry name" value="mscL"/>
    <property type="match status" value="1"/>
</dbReference>
<dbReference type="PANTHER" id="PTHR30266:SF2">
    <property type="entry name" value="LARGE-CONDUCTANCE MECHANOSENSITIVE CHANNEL"/>
    <property type="match status" value="1"/>
</dbReference>
<dbReference type="PANTHER" id="PTHR30266">
    <property type="entry name" value="MECHANOSENSITIVE CHANNEL MSCL"/>
    <property type="match status" value="1"/>
</dbReference>
<dbReference type="Pfam" id="PF01741">
    <property type="entry name" value="MscL"/>
    <property type="match status" value="1"/>
</dbReference>
<dbReference type="PRINTS" id="PR01264">
    <property type="entry name" value="MECHCHANNEL"/>
</dbReference>
<dbReference type="SUPFAM" id="SSF81330">
    <property type="entry name" value="Gated mechanosensitive channel"/>
    <property type="match status" value="1"/>
</dbReference>
<dbReference type="PROSITE" id="PS01327">
    <property type="entry name" value="MSCL"/>
    <property type="match status" value="1"/>
</dbReference>
<keyword id="KW-1003">Cell membrane</keyword>
<keyword id="KW-0407">Ion channel</keyword>
<keyword id="KW-0406">Ion transport</keyword>
<keyword id="KW-0472">Membrane</keyword>
<keyword id="KW-1185">Reference proteome</keyword>
<keyword id="KW-0812">Transmembrane</keyword>
<keyword id="KW-1133">Transmembrane helix</keyword>
<keyword id="KW-0813">Transport</keyword>
<accession>Q38V39</accession>
<protein>
    <recommendedName>
        <fullName evidence="1">Large-conductance mechanosensitive channel</fullName>
    </recommendedName>
</protein>
<gene>
    <name evidence="1" type="primary">mscL</name>
    <name type="ordered locus">LCA_1638</name>
</gene>
<comment type="function">
    <text evidence="1">Channel that opens in response to stretch forces in the membrane lipid bilayer. May participate in the regulation of osmotic pressure changes within the cell.</text>
</comment>
<comment type="subunit">
    <text evidence="1">Homopentamer.</text>
</comment>
<comment type="subcellular location">
    <subcellularLocation>
        <location evidence="1">Cell membrane</location>
        <topology evidence="1">Multi-pass membrane protein</topology>
    </subcellularLocation>
</comment>
<comment type="similarity">
    <text evidence="1">Belongs to the MscL family.</text>
</comment>
<name>MSCL_LATSS</name>